<gene>
    <name type="primary">rpmGB</name>
    <name type="synonym">rpmG</name>
    <name evidence="1" type="synonym">rpmG2</name>
    <name type="ordered locus">BSU00990</name>
</gene>
<organism>
    <name type="scientific">Bacillus subtilis (strain 168)</name>
    <dbReference type="NCBI Taxonomy" id="224308"/>
    <lineage>
        <taxon>Bacteria</taxon>
        <taxon>Bacillati</taxon>
        <taxon>Bacillota</taxon>
        <taxon>Bacilli</taxon>
        <taxon>Bacillales</taxon>
        <taxon>Bacillaceae</taxon>
        <taxon>Bacillus</taxon>
    </lineage>
</organism>
<feature type="chain" id="PRO_0000170140" description="Large ribosomal subunit protein bL33B">
    <location>
        <begin position="1"/>
        <end position="49"/>
    </location>
</feature>
<dbReference type="EMBL" id="D13303">
    <property type="protein sequence ID" value="BAA02558.1"/>
    <property type="molecule type" value="Genomic_DNA"/>
</dbReference>
<dbReference type="EMBL" id="AL009126">
    <property type="protein sequence ID" value="CAB11875.1"/>
    <property type="molecule type" value="Genomic_DNA"/>
</dbReference>
<dbReference type="PIR" id="S39857">
    <property type="entry name" value="S39857"/>
</dbReference>
<dbReference type="RefSeq" id="NP_387980.1">
    <property type="nucleotide sequence ID" value="NC_000964.3"/>
</dbReference>
<dbReference type="RefSeq" id="WP_003156421.1">
    <property type="nucleotide sequence ID" value="NZ_OZ025638.1"/>
</dbReference>
<dbReference type="SMR" id="Q06798"/>
<dbReference type="FunCoup" id="Q06798">
    <property type="interactions" value="94"/>
</dbReference>
<dbReference type="STRING" id="224308.BSU00990"/>
<dbReference type="PaxDb" id="224308-BSU00990"/>
<dbReference type="EnsemblBacteria" id="CAB11875">
    <property type="protein sequence ID" value="CAB11875"/>
    <property type="gene ID" value="BSU_00990"/>
</dbReference>
<dbReference type="GeneID" id="93079263"/>
<dbReference type="GeneID" id="936842"/>
<dbReference type="KEGG" id="bsu:BSU00990"/>
<dbReference type="PATRIC" id="fig|224308.179.peg.102"/>
<dbReference type="eggNOG" id="COG0267">
    <property type="taxonomic scope" value="Bacteria"/>
</dbReference>
<dbReference type="InParanoid" id="Q06798"/>
<dbReference type="OrthoDB" id="9801333at2"/>
<dbReference type="PhylomeDB" id="Q06798"/>
<dbReference type="BioCyc" id="BSUB:BSU00990-MONOMER"/>
<dbReference type="PRO" id="PR:Q06798"/>
<dbReference type="Proteomes" id="UP000001570">
    <property type="component" value="Chromosome"/>
</dbReference>
<dbReference type="GO" id="GO:0005737">
    <property type="term" value="C:cytoplasm"/>
    <property type="evidence" value="ECO:0007669"/>
    <property type="project" value="UniProtKB-ARBA"/>
</dbReference>
<dbReference type="GO" id="GO:1990904">
    <property type="term" value="C:ribonucleoprotein complex"/>
    <property type="evidence" value="ECO:0007669"/>
    <property type="project" value="UniProtKB-KW"/>
</dbReference>
<dbReference type="GO" id="GO:0005840">
    <property type="term" value="C:ribosome"/>
    <property type="evidence" value="ECO:0007669"/>
    <property type="project" value="UniProtKB-KW"/>
</dbReference>
<dbReference type="GO" id="GO:0003735">
    <property type="term" value="F:structural constituent of ribosome"/>
    <property type="evidence" value="ECO:0007669"/>
    <property type="project" value="InterPro"/>
</dbReference>
<dbReference type="GO" id="GO:0046677">
    <property type="term" value="P:response to antibiotic"/>
    <property type="evidence" value="ECO:0007669"/>
    <property type="project" value="UniProtKB-KW"/>
</dbReference>
<dbReference type="GO" id="GO:0006412">
    <property type="term" value="P:translation"/>
    <property type="evidence" value="ECO:0007669"/>
    <property type="project" value="UniProtKB-UniRule"/>
</dbReference>
<dbReference type="Gene3D" id="2.20.28.120">
    <property type="entry name" value="Ribosomal protein L33"/>
    <property type="match status" value="1"/>
</dbReference>
<dbReference type="HAMAP" id="MF_00294">
    <property type="entry name" value="Ribosomal_bL33"/>
    <property type="match status" value="1"/>
</dbReference>
<dbReference type="InterPro" id="IPR001705">
    <property type="entry name" value="Ribosomal_bL33"/>
</dbReference>
<dbReference type="InterPro" id="IPR018264">
    <property type="entry name" value="Ribosomal_bL33_CS"/>
</dbReference>
<dbReference type="InterPro" id="IPR038584">
    <property type="entry name" value="Ribosomal_bL33_sf"/>
</dbReference>
<dbReference type="InterPro" id="IPR011332">
    <property type="entry name" value="Ribosomal_zn-bd"/>
</dbReference>
<dbReference type="NCBIfam" id="NF001764">
    <property type="entry name" value="PRK00504.1"/>
    <property type="match status" value="1"/>
</dbReference>
<dbReference type="NCBIfam" id="NF001860">
    <property type="entry name" value="PRK00595.1"/>
    <property type="match status" value="1"/>
</dbReference>
<dbReference type="NCBIfam" id="TIGR01023">
    <property type="entry name" value="rpmG_bact"/>
    <property type="match status" value="1"/>
</dbReference>
<dbReference type="PANTHER" id="PTHR43168">
    <property type="entry name" value="50S RIBOSOMAL PROTEIN L33, CHLOROPLASTIC"/>
    <property type="match status" value="1"/>
</dbReference>
<dbReference type="PANTHER" id="PTHR43168:SF5">
    <property type="entry name" value="LARGE RIBOSOMAL SUBUNIT PROTEIN BL33B"/>
    <property type="match status" value="1"/>
</dbReference>
<dbReference type="Pfam" id="PF00471">
    <property type="entry name" value="Ribosomal_L33"/>
    <property type="match status" value="1"/>
</dbReference>
<dbReference type="SUPFAM" id="SSF57829">
    <property type="entry name" value="Zn-binding ribosomal proteins"/>
    <property type="match status" value="1"/>
</dbReference>
<dbReference type="PROSITE" id="PS00582">
    <property type="entry name" value="RIBOSOMAL_L33"/>
    <property type="match status" value="1"/>
</dbReference>
<keyword id="KW-0046">Antibiotic resistance</keyword>
<keyword id="KW-1185">Reference proteome</keyword>
<keyword id="KW-0687">Ribonucleoprotein</keyword>
<keyword id="KW-0689">Ribosomal protein</keyword>
<comment type="function">
    <text evidence="2">Plays a role in sporulation at high temperatures.</text>
</comment>
<comment type="disruption phenotype">
    <text evidence="2">No effect on sporulation at 37 degrees Celsius, however sporulation decreases at 47 degrees Celsius.</text>
</comment>
<comment type="miscellaneous">
    <text evidence="3">An unknown mutation in this protein gives rise to thiostrepton resistance.</text>
</comment>
<comment type="similarity">
    <text evidence="1 4">Belongs to the bacterial ribosomal protein bL33 family.</text>
</comment>
<protein>
    <recommendedName>
        <fullName evidence="1">Large ribosomal subunit protein bL33B</fullName>
    </recommendedName>
    <alternativeName>
        <fullName>50S ribosomal protein L33 2</fullName>
    </alternativeName>
</protein>
<sequence length="49" mass="5496">MRKKITLACKTCGNRNYTTMKSSASAAERLEVKKYCSTCNSHTAHLETK</sequence>
<reference key="1">
    <citation type="journal article" date="1993" name="Mol. Microbiol.">
        <title>Isolation and characterization of the secE homologue gene of Bacillus subtilis.</title>
        <authorList>
            <person name="Jeong S."/>
            <person name="Yoshikawa H."/>
            <person name="Takahashi H."/>
        </authorList>
    </citation>
    <scope>NUCLEOTIDE SEQUENCE [GENOMIC DNA]</scope>
</reference>
<reference key="2">
    <citation type="journal article" date="1997" name="Nature">
        <title>The complete genome sequence of the Gram-positive bacterium Bacillus subtilis.</title>
        <authorList>
            <person name="Kunst F."/>
            <person name="Ogasawara N."/>
            <person name="Moszer I."/>
            <person name="Albertini A.M."/>
            <person name="Alloni G."/>
            <person name="Azevedo V."/>
            <person name="Bertero M.G."/>
            <person name="Bessieres P."/>
            <person name="Bolotin A."/>
            <person name="Borchert S."/>
            <person name="Borriss R."/>
            <person name="Boursier L."/>
            <person name="Brans A."/>
            <person name="Braun M."/>
            <person name="Brignell S.C."/>
            <person name="Bron S."/>
            <person name="Brouillet S."/>
            <person name="Bruschi C.V."/>
            <person name="Caldwell B."/>
            <person name="Capuano V."/>
            <person name="Carter N.M."/>
            <person name="Choi S.-K."/>
            <person name="Codani J.-J."/>
            <person name="Connerton I.F."/>
            <person name="Cummings N.J."/>
            <person name="Daniel R.A."/>
            <person name="Denizot F."/>
            <person name="Devine K.M."/>
            <person name="Duesterhoeft A."/>
            <person name="Ehrlich S.D."/>
            <person name="Emmerson P.T."/>
            <person name="Entian K.-D."/>
            <person name="Errington J."/>
            <person name="Fabret C."/>
            <person name="Ferrari E."/>
            <person name="Foulger D."/>
            <person name="Fritz C."/>
            <person name="Fujita M."/>
            <person name="Fujita Y."/>
            <person name="Fuma S."/>
            <person name="Galizzi A."/>
            <person name="Galleron N."/>
            <person name="Ghim S.-Y."/>
            <person name="Glaser P."/>
            <person name="Goffeau A."/>
            <person name="Golightly E.J."/>
            <person name="Grandi G."/>
            <person name="Guiseppi G."/>
            <person name="Guy B.J."/>
            <person name="Haga K."/>
            <person name="Haiech J."/>
            <person name="Harwood C.R."/>
            <person name="Henaut A."/>
            <person name="Hilbert H."/>
            <person name="Holsappel S."/>
            <person name="Hosono S."/>
            <person name="Hullo M.-F."/>
            <person name="Itaya M."/>
            <person name="Jones L.-M."/>
            <person name="Joris B."/>
            <person name="Karamata D."/>
            <person name="Kasahara Y."/>
            <person name="Klaerr-Blanchard M."/>
            <person name="Klein C."/>
            <person name="Kobayashi Y."/>
            <person name="Koetter P."/>
            <person name="Koningstein G."/>
            <person name="Krogh S."/>
            <person name="Kumano M."/>
            <person name="Kurita K."/>
            <person name="Lapidus A."/>
            <person name="Lardinois S."/>
            <person name="Lauber J."/>
            <person name="Lazarevic V."/>
            <person name="Lee S.-M."/>
            <person name="Levine A."/>
            <person name="Liu H."/>
            <person name="Masuda S."/>
            <person name="Mauel C."/>
            <person name="Medigue C."/>
            <person name="Medina N."/>
            <person name="Mellado R.P."/>
            <person name="Mizuno M."/>
            <person name="Moestl D."/>
            <person name="Nakai S."/>
            <person name="Noback M."/>
            <person name="Noone D."/>
            <person name="O'Reilly M."/>
            <person name="Ogawa K."/>
            <person name="Ogiwara A."/>
            <person name="Oudega B."/>
            <person name="Park S.-H."/>
            <person name="Parro V."/>
            <person name="Pohl T.M."/>
            <person name="Portetelle D."/>
            <person name="Porwollik S."/>
            <person name="Prescott A.M."/>
            <person name="Presecan E."/>
            <person name="Pujic P."/>
            <person name="Purnelle B."/>
            <person name="Rapoport G."/>
            <person name="Rey M."/>
            <person name="Reynolds S."/>
            <person name="Rieger M."/>
            <person name="Rivolta C."/>
            <person name="Rocha E."/>
            <person name="Roche B."/>
            <person name="Rose M."/>
            <person name="Sadaie Y."/>
            <person name="Sato T."/>
            <person name="Scanlan E."/>
            <person name="Schleich S."/>
            <person name="Schroeter R."/>
            <person name="Scoffone F."/>
            <person name="Sekiguchi J."/>
            <person name="Sekowska A."/>
            <person name="Seror S.J."/>
            <person name="Serror P."/>
            <person name="Shin B.-S."/>
            <person name="Soldo B."/>
            <person name="Sorokin A."/>
            <person name="Tacconi E."/>
            <person name="Takagi T."/>
            <person name="Takahashi H."/>
            <person name="Takemaru K."/>
            <person name="Takeuchi M."/>
            <person name="Tamakoshi A."/>
            <person name="Tanaka T."/>
            <person name="Terpstra P."/>
            <person name="Tognoni A."/>
            <person name="Tosato V."/>
            <person name="Uchiyama S."/>
            <person name="Vandenbol M."/>
            <person name="Vannier F."/>
            <person name="Vassarotti A."/>
            <person name="Viari A."/>
            <person name="Wambutt R."/>
            <person name="Wedler E."/>
            <person name="Wedler H."/>
            <person name="Weitzenegger T."/>
            <person name="Winters P."/>
            <person name="Wipat A."/>
            <person name="Yamamoto H."/>
            <person name="Yamane K."/>
            <person name="Yasumoto K."/>
            <person name="Yata K."/>
            <person name="Yoshida K."/>
            <person name="Yoshikawa H.-F."/>
            <person name="Zumstein E."/>
            <person name="Yoshikawa H."/>
            <person name="Danchin A."/>
        </authorList>
    </citation>
    <scope>NUCLEOTIDE SEQUENCE [LARGE SCALE GENOMIC DNA]</scope>
    <source>
        <strain>168</strain>
    </source>
</reference>
<reference key="3">
    <citation type="journal article" date="1980" name="Mol. Gen. Genet.">
        <title>Genetics and physiology of the rel system of Bacillus subtilis.</title>
        <authorList>
            <person name="Smith I."/>
            <person name="Paress P."/>
            <person name="Cabane K."/>
            <person name="Dubnau E."/>
        </authorList>
    </citation>
    <scope>THIOSTREPTON RESISTANCE</scope>
</reference>
<reference key="4">
    <citation type="journal article" date="2003" name="Biosci. Biotechnol. Biochem.">
        <title>Expression profiling of translation-associated genes in sporulating Bacillus subtilis and consequence of sporulation by gene inactivation.</title>
        <authorList>
            <person name="Ohashi Y."/>
            <person name="Inaoka T."/>
            <person name="Kasai K."/>
            <person name="Ito Y."/>
            <person name="Okamoto S."/>
            <person name="Satsu H."/>
            <person name="Tozawa Y."/>
            <person name="Kawamura F."/>
            <person name="Ochi K."/>
        </authorList>
    </citation>
    <scope>DISRUPTION PHENOTYPE</scope>
    <scope>ROLE IN SPORULATION</scope>
    <source>
        <strain>168</strain>
    </source>
</reference>
<proteinExistence type="inferred from homology"/>
<name>RL332_BACSU</name>
<accession>Q06798</accession>
<evidence type="ECO:0000255" key="1">
    <source>
        <dbReference type="HAMAP-Rule" id="MF_00294"/>
    </source>
</evidence>
<evidence type="ECO:0000269" key="2">
    <source>
    </source>
</evidence>
<evidence type="ECO:0000269" key="3">
    <source>
    </source>
</evidence>
<evidence type="ECO:0000305" key="4"/>